<proteinExistence type="inferred from homology"/>
<gene>
    <name evidence="1" type="primary">kdpC</name>
    <name type="ordered locus">Bcep1808_2371</name>
</gene>
<comment type="function">
    <text evidence="1">Part of the high-affinity ATP-driven potassium transport (or Kdp) system, which catalyzes the hydrolysis of ATP coupled with the electrogenic transport of potassium into the cytoplasm. This subunit acts as a catalytic chaperone that increases the ATP-binding affinity of the ATP-hydrolyzing subunit KdpB by the formation of a transient KdpB/KdpC/ATP ternary complex.</text>
</comment>
<comment type="subunit">
    <text evidence="1">The system is composed of three essential subunits: KdpA, KdpB and KdpC.</text>
</comment>
<comment type="subcellular location">
    <subcellularLocation>
        <location evidence="1">Cell inner membrane</location>
        <topology evidence="1">Single-pass membrane protein</topology>
    </subcellularLocation>
</comment>
<comment type="similarity">
    <text evidence="1">Belongs to the KdpC family.</text>
</comment>
<feature type="chain" id="PRO_1000022278" description="Potassium-transporting ATPase KdpC subunit">
    <location>
        <begin position="1"/>
        <end position="193"/>
    </location>
</feature>
<feature type="transmembrane region" description="Helical" evidence="1">
    <location>
        <begin position="7"/>
        <end position="27"/>
    </location>
</feature>
<sequence length="193" mass="19903">MKTLIRPLVVIFAVLTVVTGMAYPAVMTAFGQAVFPAQANGSLIERDGRAVGSALIGQPFDAPRYFWGRLSATAPMPYNAAGSGGSNLGPLNPSLAEQVKARIAALRDAGTDLSKPVPVDLVTASASGLDPDITPAAAAYQIERVAKARKLTADAVARLVAANTTGRQFGVLGEPRVNVLKLNLALDAAQGGH</sequence>
<reference key="1">
    <citation type="submission" date="2007-03" db="EMBL/GenBank/DDBJ databases">
        <title>Complete sequence of chromosome 1 of Burkholderia vietnamiensis G4.</title>
        <authorList>
            <consortium name="US DOE Joint Genome Institute"/>
            <person name="Copeland A."/>
            <person name="Lucas S."/>
            <person name="Lapidus A."/>
            <person name="Barry K."/>
            <person name="Detter J.C."/>
            <person name="Glavina del Rio T."/>
            <person name="Hammon N."/>
            <person name="Israni S."/>
            <person name="Dalin E."/>
            <person name="Tice H."/>
            <person name="Pitluck S."/>
            <person name="Chain P."/>
            <person name="Malfatti S."/>
            <person name="Shin M."/>
            <person name="Vergez L."/>
            <person name="Schmutz J."/>
            <person name="Larimer F."/>
            <person name="Land M."/>
            <person name="Hauser L."/>
            <person name="Kyrpides N."/>
            <person name="Tiedje J."/>
            <person name="Richardson P."/>
        </authorList>
    </citation>
    <scope>NUCLEOTIDE SEQUENCE [LARGE SCALE GENOMIC DNA]</scope>
    <source>
        <strain>G4 / LMG 22486</strain>
    </source>
</reference>
<name>KDPC_BURVG</name>
<dbReference type="EMBL" id="CP000614">
    <property type="protein sequence ID" value="ABO55370.1"/>
    <property type="molecule type" value="Genomic_DNA"/>
</dbReference>
<dbReference type="SMR" id="A4JGG7"/>
<dbReference type="KEGG" id="bvi:Bcep1808_2371"/>
<dbReference type="eggNOG" id="COG2156">
    <property type="taxonomic scope" value="Bacteria"/>
</dbReference>
<dbReference type="HOGENOM" id="CLU_077094_2_0_4"/>
<dbReference type="Proteomes" id="UP000002287">
    <property type="component" value="Chromosome 1"/>
</dbReference>
<dbReference type="GO" id="GO:0005886">
    <property type="term" value="C:plasma membrane"/>
    <property type="evidence" value="ECO:0007669"/>
    <property type="project" value="UniProtKB-SubCell"/>
</dbReference>
<dbReference type="GO" id="GO:0005524">
    <property type="term" value="F:ATP binding"/>
    <property type="evidence" value="ECO:0007669"/>
    <property type="project" value="UniProtKB-UniRule"/>
</dbReference>
<dbReference type="GO" id="GO:0008556">
    <property type="term" value="F:P-type potassium transmembrane transporter activity"/>
    <property type="evidence" value="ECO:0007669"/>
    <property type="project" value="InterPro"/>
</dbReference>
<dbReference type="HAMAP" id="MF_00276">
    <property type="entry name" value="KdpC"/>
    <property type="match status" value="1"/>
</dbReference>
<dbReference type="InterPro" id="IPR003820">
    <property type="entry name" value="KdpC"/>
</dbReference>
<dbReference type="NCBIfam" id="TIGR00681">
    <property type="entry name" value="kdpC"/>
    <property type="match status" value="1"/>
</dbReference>
<dbReference type="NCBIfam" id="NF001454">
    <property type="entry name" value="PRK00315.1"/>
    <property type="match status" value="1"/>
</dbReference>
<dbReference type="PANTHER" id="PTHR30042">
    <property type="entry name" value="POTASSIUM-TRANSPORTING ATPASE C CHAIN"/>
    <property type="match status" value="1"/>
</dbReference>
<dbReference type="PANTHER" id="PTHR30042:SF2">
    <property type="entry name" value="POTASSIUM-TRANSPORTING ATPASE KDPC SUBUNIT"/>
    <property type="match status" value="1"/>
</dbReference>
<dbReference type="Pfam" id="PF02669">
    <property type="entry name" value="KdpC"/>
    <property type="match status" value="1"/>
</dbReference>
<dbReference type="PIRSF" id="PIRSF001296">
    <property type="entry name" value="K_ATPase_KdpC"/>
    <property type="match status" value="1"/>
</dbReference>
<protein>
    <recommendedName>
        <fullName evidence="1">Potassium-transporting ATPase KdpC subunit</fullName>
    </recommendedName>
    <alternativeName>
        <fullName evidence="1">ATP phosphohydrolase [potassium-transporting] C chain</fullName>
    </alternativeName>
    <alternativeName>
        <fullName evidence="1">Potassium-binding and translocating subunit C</fullName>
    </alternativeName>
    <alternativeName>
        <fullName evidence="1">Potassium-translocating ATPase C chain</fullName>
    </alternativeName>
</protein>
<keyword id="KW-0067">ATP-binding</keyword>
<keyword id="KW-0997">Cell inner membrane</keyword>
<keyword id="KW-1003">Cell membrane</keyword>
<keyword id="KW-0406">Ion transport</keyword>
<keyword id="KW-0472">Membrane</keyword>
<keyword id="KW-0547">Nucleotide-binding</keyword>
<keyword id="KW-0630">Potassium</keyword>
<keyword id="KW-0633">Potassium transport</keyword>
<keyword id="KW-0812">Transmembrane</keyword>
<keyword id="KW-1133">Transmembrane helix</keyword>
<keyword id="KW-0813">Transport</keyword>
<organism>
    <name type="scientific">Burkholderia vietnamiensis (strain G4 / LMG 22486)</name>
    <name type="common">Burkholderia cepacia (strain R1808)</name>
    <dbReference type="NCBI Taxonomy" id="269482"/>
    <lineage>
        <taxon>Bacteria</taxon>
        <taxon>Pseudomonadati</taxon>
        <taxon>Pseudomonadota</taxon>
        <taxon>Betaproteobacteria</taxon>
        <taxon>Burkholderiales</taxon>
        <taxon>Burkholderiaceae</taxon>
        <taxon>Burkholderia</taxon>
        <taxon>Burkholderia cepacia complex</taxon>
    </lineage>
</organism>
<evidence type="ECO:0000255" key="1">
    <source>
        <dbReference type="HAMAP-Rule" id="MF_00276"/>
    </source>
</evidence>
<accession>A4JGG7</accession>